<accession>Q98L33</accession>
<name>COBQ_RHILO</name>
<reference key="1">
    <citation type="journal article" date="2000" name="DNA Res.">
        <title>Complete genome structure of the nitrogen-fixing symbiotic bacterium Mesorhizobium loti.</title>
        <authorList>
            <person name="Kaneko T."/>
            <person name="Nakamura Y."/>
            <person name="Sato S."/>
            <person name="Asamizu E."/>
            <person name="Kato T."/>
            <person name="Sasamoto S."/>
            <person name="Watanabe A."/>
            <person name="Idesawa K."/>
            <person name="Ishikawa A."/>
            <person name="Kawashima K."/>
            <person name="Kimura T."/>
            <person name="Kishida Y."/>
            <person name="Kiyokawa C."/>
            <person name="Kohara M."/>
            <person name="Matsumoto M."/>
            <person name="Matsuno A."/>
            <person name="Mochizuki Y."/>
            <person name="Nakayama S."/>
            <person name="Nakazaki N."/>
            <person name="Shimpo S."/>
            <person name="Sugimoto M."/>
            <person name="Takeuchi C."/>
            <person name="Yamada M."/>
            <person name="Tabata S."/>
        </authorList>
    </citation>
    <scope>NUCLEOTIDE SEQUENCE [LARGE SCALE GENOMIC DNA]</scope>
    <source>
        <strain>LMG 29417 / CECT 9101 / MAFF 303099</strain>
    </source>
</reference>
<dbReference type="EMBL" id="BA000012">
    <property type="protein sequence ID" value="BAB48630.1"/>
    <property type="molecule type" value="Genomic_DNA"/>
</dbReference>
<dbReference type="RefSeq" id="WP_010909984.1">
    <property type="nucleotide sequence ID" value="NC_002678.2"/>
</dbReference>
<dbReference type="SMR" id="Q98L33"/>
<dbReference type="KEGG" id="mlo:mll1198"/>
<dbReference type="eggNOG" id="COG1492">
    <property type="taxonomic scope" value="Bacteria"/>
</dbReference>
<dbReference type="HOGENOM" id="CLU_019250_2_2_5"/>
<dbReference type="UniPathway" id="UPA00148"/>
<dbReference type="Proteomes" id="UP000000552">
    <property type="component" value="Chromosome"/>
</dbReference>
<dbReference type="GO" id="GO:0015420">
    <property type="term" value="F:ABC-type vitamin B12 transporter activity"/>
    <property type="evidence" value="ECO:0007669"/>
    <property type="project" value="UniProtKB-UniRule"/>
</dbReference>
<dbReference type="GO" id="GO:0003824">
    <property type="term" value="F:catalytic activity"/>
    <property type="evidence" value="ECO:0007669"/>
    <property type="project" value="InterPro"/>
</dbReference>
<dbReference type="GO" id="GO:0009236">
    <property type="term" value="P:cobalamin biosynthetic process"/>
    <property type="evidence" value="ECO:0007669"/>
    <property type="project" value="UniProtKB-UniRule"/>
</dbReference>
<dbReference type="CDD" id="cd05389">
    <property type="entry name" value="CobQ_N"/>
    <property type="match status" value="1"/>
</dbReference>
<dbReference type="CDD" id="cd01750">
    <property type="entry name" value="GATase1_CobQ"/>
    <property type="match status" value="1"/>
</dbReference>
<dbReference type="Gene3D" id="3.40.50.880">
    <property type="match status" value="1"/>
</dbReference>
<dbReference type="Gene3D" id="3.40.50.300">
    <property type="entry name" value="P-loop containing nucleotide triphosphate hydrolases"/>
    <property type="match status" value="1"/>
</dbReference>
<dbReference type="HAMAP" id="MF_00028">
    <property type="entry name" value="CobQ"/>
    <property type="match status" value="1"/>
</dbReference>
<dbReference type="InterPro" id="IPR029062">
    <property type="entry name" value="Class_I_gatase-like"/>
</dbReference>
<dbReference type="InterPro" id="IPR002586">
    <property type="entry name" value="CobQ/CobB/MinD/ParA_Nub-bd_dom"/>
</dbReference>
<dbReference type="InterPro" id="IPR033949">
    <property type="entry name" value="CobQ_GATase1"/>
</dbReference>
<dbReference type="InterPro" id="IPR047045">
    <property type="entry name" value="CobQ_N"/>
</dbReference>
<dbReference type="InterPro" id="IPR004459">
    <property type="entry name" value="CobQ_synth"/>
</dbReference>
<dbReference type="InterPro" id="IPR011698">
    <property type="entry name" value="GATase_3"/>
</dbReference>
<dbReference type="InterPro" id="IPR027417">
    <property type="entry name" value="P-loop_NTPase"/>
</dbReference>
<dbReference type="NCBIfam" id="TIGR00313">
    <property type="entry name" value="cobQ"/>
    <property type="match status" value="1"/>
</dbReference>
<dbReference type="NCBIfam" id="NF001989">
    <property type="entry name" value="PRK00784.1"/>
    <property type="match status" value="1"/>
</dbReference>
<dbReference type="PANTHER" id="PTHR21343:SF1">
    <property type="entry name" value="COBYRIC ACID SYNTHASE"/>
    <property type="match status" value="1"/>
</dbReference>
<dbReference type="PANTHER" id="PTHR21343">
    <property type="entry name" value="DETHIOBIOTIN SYNTHETASE"/>
    <property type="match status" value="1"/>
</dbReference>
<dbReference type="Pfam" id="PF01656">
    <property type="entry name" value="CbiA"/>
    <property type="match status" value="1"/>
</dbReference>
<dbReference type="Pfam" id="PF07685">
    <property type="entry name" value="GATase_3"/>
    <property type="match status" value="1"/>
</dbReference>
<dbReference type="SUPFAM" id="SSF52317">
    <property type="entry name" value="Class I glutamine amidotransferase-like"/>
    <property type="match status" value="1"/>
</dbReference>
<dbReference type="SUPFAM" id="SSF52540">
    <property type="entry name" value="P-loop containing nucleoside triphosphate hydrolases"/>
    <property type="match status" value="1"/>
</dbReference>
<dbReference type="PROSITE" id="PS51274">
    <property type="entry name" value="GATASE_COBBQ"/>
    <property type="match status" value="1"/>
</dbReference>
<comment type="function">
    <text evidence="1">Catalyzes amidations at positions B, D, E, and G on adenosylcobyrinic A,C-diamide. NH(2) groups are provided by glutamine, and one molecule of ATP is hydrogenolyzed for each amidation.</text>
</comment>
<comment type="pathway">
    <text evidence="1">Cofactor biosynthesis; adenosylcobalamin biosynthesis.</text>
</comment>
<comment type="similarity">
    <text evidence="1">Belongs to the CobB/CobQ family. CobQ subfamily.</text>
</comment>
<gene>
    <name evidence="1" type="primary">cobQ</name>
    <name type="ordered locus">mll1198</name>
</gene>
<protein>
    <recommendedName>
        <fullName evidence="1">Cobyric acid synthase</fullName>
    </recommendedName>
</protein>
<sequence>MARAIMLQGTGSDVGKTVLVAGLCRAAKKRGLKVRPFKPQNMSNNAAVADIPGDNNHGGGEIGRAQWLQAIACGVAPSVHMNPVLLKPQSDVGAQVIVQGKVFGEARARDYQALKGRLMDAVLDSWAKVGEGADLVIVEGAGSPAEINLRSRDIANMGFATRADVPVVLVGDIDRGGVIASVAGTHLILPEEDRRMIVGYLINKFRGDVSLFDDGLKAIEKFTGWRCFGVVPWLKAAARLPSEDSVVLERLASGEARALKVAVPVLGRIANFDDLDPLKAEPQVEVVFVPPGKPLPSDAGLVVIPGSKSTIGDLIRFRENGWDRDLATHRKRGGHVVGICGGFQMLGRRVRDPDGIEGSVTEAEGLGLLDIETMMEPEKTVRNVSARSVQFDLPLEGYEIHLGRTTGPDTMRPSAIINGVADGAISADGKVIGTYMHGLFGADAFRGKFLESLGIKGGGIDYRVEVERALDDVAAELEGHLDCDALFGLAR</sequence>
<organism>
    <name type="scientific">Mesorhizobium japonicum (strain LMG 29417 / CECT 9101 / MAFF 303099)</name>
    <name type="common">Mesorhizobium loti (strain MAFF 303099)</name>
    <dbReference type="NCBI Taxonomy" id="266835"/>
    <lineage>
        <taxon>Bacteria</taxon>
        <taxon>Pseudomonadati</taxon>
        <taxon>Pseudomonadota</taxon>
        <taxon>Alphaproteobacteria</taxon>
        <taxon>Hyphomicrobiales</taxon>
        <taxon>Phyllobacteriaceae</taxon>
        <taxon>Mesorhizobium</taxon>
    </lineage>
</organism>
<keyword id="KW-0169">Cobalamin biosynthesis</keyword>
<keyword id="KW-0315">Glutamine amidotransferase</keyword>
<feature type="chain" id="PRO_0000141325" description="Cobyric acid synthase">
    <location>
        <begin position="1"/>
        <end position="491"/>
    </location>
</feature>
<feature type="domain" description="GATase cobBQ-type" evidence="1">
    <location>
        <begin position="258"/>
        <end position="445"/>
    </location>
</feature>
<feature type="active site" description="Nucleophile" evidence="1">
    <location>
        <position position="340"/>
    </location>
</feature>
<feature type="active site" evidence="1">
    <location>
        <position position="437"/>
    </location>
</feature>
<evidence type="ECO:0000255" key="1">
    <source>
        <dbReference type="HAMAP-Rule" id="MF_00028"/>
    </source>
</evidence>
<proteinExistence type="inferred from homology"/>